<evidence type="ECO:0000255" key="1">
    <source>
        <dbReference type="HAMAP-Rule" id="MF_00302"/>
    </source>
</evidence>
<gene>
    <name evidence="1" type="primary">clpS</name>
    <name type="ordered locus">Ent638_1398</name>
</gene>
<accession>A4W8P9</accession>
<name>CLPS_ENT38</name>
<dbReference type="EMBL" id="CP000653">
    <property type="protein sequence ID" value="ABP60079.1"/>
    <property type="molecule type" value="Genomic_DNA"/>
</dbReference>
<dbReference type="RefSeq" id="WP_012016798.1">
    <property type="nucleotide sequence ID" value="NC_009436.1"/>
</dbReference>
<dbReference type="SMR" id="A4W8P9"/>
<dbReference type="STRING" id="399742.Ent638_1398"/>
<dbReference type="GeneID" id="93308495"/>
<dbReference type="KEGG" id="ent:Ent638_1398"/>
<dbReference type="eggNOG" id="COG2127">
    <property type="taxonomic scope" value="Bacteria"/>
</dbReference>
<dbReference type="HOGENOM" id="CLU_134358_2_1_6"/>
<dbReference type="OrthoDB" id="9796121at2"/>
<dbReference type="Proteomes" id="UP000000230">
    <property type="component" value="Chromosome"/>
</dbReference>
<dbReference type="GO" id="GO:0030163">
    <property type="term" value="P:protein catabolic process"/>
    <property type="evidence" value="ECO:0007669"/>
    <property type="project" value="InterPro"/>
</dbReference>
<dbReference type="GO" id="GO:0006508">
    <property type="term" value="P:proteolysis"/>
    <property type="evidence" value="ECO:0007669"/>
    <property type="project" value="UniProtKB-UniRule"/>
</dbReference>
<dbReference type="FunFam" id="3.30.1390.10:FF:000002">
    <property type="entry name" value="ATP-dependent Clp protease adapter protein ClpS"/>
    <property type="match status" value="1"/>
</dbReference>
<dbReference type="Gene3D" id="3.30.1390.10">
    <property type="match status" value="1"/>
</dbReference>
<dbReference type="HAMAP" id="MF_00302">
    <property type="entry name" value="ClpS"/>
    <property type="match status" value="1"/>
</dbReference>
<dbReference type="InterPro" id="IPR022935">
    <property type="entry name" value="ClpS"/>
</dbReference>
<dbReference type="InterPro" id="IPR003769">
    <property type="entry name" value="ClpS_core"/>
</dbReference>
<dbReference type="InterPro" id="IPR014719">
    <property type="entry name" value="Ribosomal_bL12_C/ClpS-like"/>
</dbReference>
<dbReference type="NCBIfam" id="NF000670">
    <property type="entry name" value="PRK00033.1-3"/>
    <property type="match status" value="1"/>
</dbReference>
<dbReference type="NCBIfam" id="NF000672">
    <property type="entry name" value="PRK00033.1-5"/>
    <property type="match status" value="1"/>
</dbReference>
<dbReference type="PANTHER" id="PTHR33473:SF19">
    <property type="entry name" value="ATP-DEPENDENT CLP PROTEASE ADAPTER PROTEIN CLPS"/>
    <property type="match status" value="1"/>
</dbReference>
<dbReference type="PANTHER" id="PTHR33473">
    <property type="entry name" value="ATP-DEPENDENT CLP PROTEASE ADAPTER PROTEIN CLPS1, CHLOROPLASTIC"/>
    <property type="match status" value="1"/>
</dbReference>
<dbReference type="Pfam" id="PF02617">
    <property type="entry name" value="ClpS"/>
    <property type="match status" value="1"/>
</dbReference>
<dbReference type="SUPFAM" id="SSF54736">
    <property type="entry name" value="ClpS-like"/>
    <property type="match status" value="1"/>
</dbReference>
<organism>
    <name type="scientific">Enterobacter sp. (strain 638)</name>
    <dbReference type="NCBI Taxonomy" id="399742"/>
    <lineage>
        <taxon>Bacteria</taxon>
        <taxon>Pseudomonadati</taxon>
        <taxon>Pseudomonadota</taxon>
        <taxon>Gammaproteobacteria</taxon>
        <taxon>Enterobacterales</taxon>
        <taxon>Enterobacteriaceae</taxon>
        <taxon>Enterobacter</taxon>
    </lineage>
</organism>
<proteinExistence type="inferred from homology"/>
<comment type="function">
    <text evidence="1">Involved in the modulation of the specificity of the ClpAP-mediated ATP-dependent protein degradation.</text>
</comment>
<comment type="subunit">
    <text evidence="1">Binds to the N-terminal domain of the chaperone ClpA.</text>
</comment>
<comment type="similarity">
    <text evidence="1">Belongs to the ClpS family.</text>
</comment>
<sequence length="106" mass="12345">MSKKNDWLDFDQLAEDKVRDALKPPSMYKVMLMNDDYTPMEFVIDVLQKFFSYDVERATQLMLTVHYRGKAICGIFTAEVAETKVAMVNEYARENEHPLLCTLEKA</sequence>
<protein>
    <recommendedName>
        <fullName evidence="1">ATP-dependent Clp protease adapter protein ClpS</fullName>
    </recommendedName>
</protein>
<feature type="chain" id="PRO_1000059318" description="ATP-dependent Clp protease adapter protein ClpS">
    <location>
        <begin position="1"/>
        <end position="106"/>
    </location>
</feature>
<reference key="1">
    <citation type="journal article" date="2010" name="PLoS Genet.">
        <title>Genome sequence of the plant growth promoting endophytic bacterium Enterobacter sp. 638.</title>
        <authorList>
            <person name="Taghavi S."/>
            <person name="van der Lelie D."/>
            <person name="Hoffman A."/>
            <person name="Zhang Y.B."/>
            <person name="Walla M.D."/>
            <person name="Vangronsveld J."/>
            <person name="Newman L."/>
            <person name="Monchy S."/>
        </authorList>
    </citation>
    <scope>NUCLEOTIDE SEQUENCE [LARGE SCALE GENOMIC DNA]</scope>
    <source>
        <strain>638</strain>
    </source>
</reference>